<name>PSAC_CRUWA</name>
<sequence length="81" mass="9038">MSHSVKIYDTCIGCTQCVRACPTDVLEMIPWDGCKAKQIASAPRTEDCVGCKRCESACPTDFLSVRVYLWHETTRSMGLAY</sequence>
<keyword id="KW-0004">4Fe-4S</keyword>
<keyword id="KW-0150">Chloroplast</keyword>
<keyword id="KW-0249">Electron transport</keyword>
<keyword id="KW-0408">Iron</keyword>
<keyword id="KW-0411">Iron-sulfur</keyword>
<keyword id="KW-0472">Membrane</keyword>
<keyword id="KW-0479">Metal-binding</keyword>
<keyword id="KW-0560">Oxidoreductase</keyword>
<keyword id="KW-0602">Photosynthesis</keyword>
<keyword id="KW-0603">Photosystem I</keyword>
<keyword id="KW-0934">Plastid</keyword>
<keyword id="KW-0677">Repeat</keyword>
<keyword id="KW-0793">Thylakoid</keyword>
<keyword id="KW-0813">Transport</keyword>
<gene>
    <name evidence="1" type="primary">psaC</name>
</gene>
<accession>A4QKY5</accession>
<feature type="chain" id="PRO_0000292118" description="Photosystem I iron-sulfur center">
    <location>
        <begin position="1"/>
        <end position="81"/>
    </location>
</feature>
<feature type="domain" description="4Fe-4S ferredoxin-type 1" evidence="1">
    <location>
        <begin position="2"/>
        <end position="31"/>
    </location>
</feature>
<feature type="domain" description="4Fe-4S ferredoxin-type 2" evidence="1">
    <location>
        <begin position="39"/>
        <end position="68"/>
    </location>
</feature>
<feature type="binding site" evidence="1">
    <location>
        <position position="11"/>
    </location>
    <ligand>
        <name>[4Fe-4S] cluster</name>
        <dbReference type="ChEBI" id="CHEBI:49883"/>
        <label>1</label>
    </ligand>
</feature>
<feature type="binding site" evidence="1">
    <location>
        <position position="14"/>
    </location>
    <ligand>
        <name>[4Fe-4S] cluster</name>
        <dbReference type="ChEBI" id="CHEBI:49883"/>
        <label>1</label>
    </ligand>
</feature>
<feature type="binding site" evidence="1">
    <location>
        <position position="17"/>
    </location>
    <ligand>
        <name>[4Fe-4S] cluster</name>
        <dbReference type="ChEBI" id="CHEBI:49883"/>
        <label>1</label>
    </ligand>
</feature>
<feature type="binding site" evidence="1">
    <location>
        <position position="21"/>
    </location>
    <ligand>
        <name>[4Fe-4S] cluster</name>
        <dbReference type="ChEBI" id="CHEBI:49883"/>
        <label>2</label>
    </ligand>
</feature>
<feature type="binding site" evidence="1">
    <location>
        <position position="48"/>
    </location>
    <ligand>
        <name>[4Fe-4S] cluster</name>
        <dbReference type="ChEBI" id="CHEBI:49883"/>
        <label>2</label>
    </ligand>
</feature>
<feature type="binding site" evidence="1">
    <location>
        <position position="51"/>
    </location>
    <ligand>
        <name>[4Fe-4S] cluster</name>
        <dbReference type="ChEBI" id="CHEBI:49883"/>
        <label>2</label>
    </ligand>
</feature>
<feature type="binding site" evidence="1">
    <location>
        <position position="54"/>
    </location>
    <ligand>
        <name>[4Fe-4S] cluster</name>
        <dbReference type="ChEBI" id="CHEBI:49883"/>
        <label>2</label>
    </ligand>
</feature>
<feature type="binding site" evidence="1">
    <location>
        <position position="58"/>
    </location>
    <ligand>
        <name>[4Fe-4S] cluster</name>
        <dbReference type="ChEBI" id="CHEBI:49883"/>
        <label>1</label>
    </ligand>
</feature>
<protein>
    <recommendedName>
        <fullName evidence="1">Photosystem I iron-sulfur center</fullName>
        <ecNumber evidence="1">1.97.1.12</ecNumber>
    </recommendedName>
    <alternativeName>
        <fullName evidence="1">9 kDa polypeptide</fullName>
    </alternativeName>
    <alternativeName>
        <fullName evidence="1">PSI-C</fullName>
    </alternativeName>
    <alternativeName>
        <fullName evidence="1">Photosystem I subunit VII</fullName>
    </alternativeName>
    <alternativeName>
        <fullName evidence="1">PsaC</fullName>
    </alternativeName>
</protein>
<proteinExistence type="inferred from homology"/>
<dbReference type="EC" id="1.97.1.12" evidence="1"/>
<dbReference type="EMBL" id="AP009372">
    <property type="protein sequence ID" value="BAF50340.1"/>
    <property type="molecule type" value="Genomic_DNA"/>
</dbReference>
<dbReference type="RefSeq" id="YP_001123515.1">
    <property type="nucleotide sequence ID" value="NC_009271.1"/>
</dbReference>
<dbReference type="SMR" id="A4QKY5"/>
<dbReference type="GeneID" id="4962678"/>
<dbReference type="GO" id="GO:0009535">
    <property type="term" value="C:chloroplast thylakoid membrane"/>
    <property type="evidence" value="ECO:0007669"/>
    <property type="project" value="UniProtKB-SubCell"/>
</dbReference>
<dbReference type="GO" id="GO:0009522">
    <property type="term" value="C:photosystem I"/>
    <property type="evidence" value="ECO:0007669"/>
    <property type="project" value="UniProtKB-KW"/>
</dbReference>
<dbReference type="GO" id="GO:0051539">
    <property type="term" value="F:4 iron, 4 sulfur cluster binding"/>
    <property type="evidence" value="ECO:0007669"/>
    <property type="project" value="UniProtKB-KW"/>
</dbReference>
<dbReference type="GO" id="GO:0009055">
    <property type="term" value="F:electron transfer activity"/>
    <property type="evidence" value="ECO:0007669"/>
    <property type="project" value="UniProtKB-UniRule"/>
</dbReference>
<dbReference type="GO" id="GO:0046872">
    <property type="term" value="F:metal ion binding"/>
    <property type="evidence" value="ECO:0007669"/>
    <property type="project" value="UniProtKB-KW"/>
</dbReference>
<dbReference type="GO" id="GO:0016491">
    <property type="term" value="F:oxidoreductase activity"/>
    <property type="evidence" value="ECO:0007669"/>
    <property type="project" value="UniProtKB-KW"/>
</dbReference>
<dbReference type="GO" id="GO:0009773">
    <property type="term" value="P:photosynthetic electron transport in photosystem I"/>
    <property type="evidence" value="ECO:0007669"/>
    <property type="project" value="InterPro"/>
</dbReference>
<dbReference type="FunFam" id="3.30.70.20:FF:000001">
    <property type="entry name" value="Photosystem I iron-sulfur center"/>
    <property type="match status" value="1"/>
</dbReference>
<dbReference type="Gene3D" id="3.30.70.20">
    <property type="match status" value="1"/>
</dbReference>
<dbReference type="HAMAP" id="MF_01303">
    <property type="entry name" value="PSI_PsaC"/>
    <property type="match status" value="1"/>
</dbReference>
<dbReference type="InterPro" id="IPR017896">
    <property type="entry name" value="4Fe4S_Fe-S-bd"/>
</dbReference>
<dbReference type="InterPro" id="IPR017900">
    <property type="entry name" value="4Fe4S_Fe_S_CS"/>
</dbReference>
<dbReference type="InterPro" id="IPR050157">
    <property type="entry name" value="PSI_iron-sulfur_center"/>
</dbReference>
<dbReference type="InterPro" id="IPR017491">
    <property type="entry name" value="PSI_PsaC"/>
</dbReference>
<dbReference type="NCBIfam" id="TIGR03048">
    <property type="entry name" value="PS_I_psaC"/>
    <property type="match status" value="1"/>
</dbReference>
<dbReference type="PANTHER" id="PTHR24960:SF79">
    <property type="entry name" value="PHOTOSYSTEM I IRON-SULFUR CENTER"/>
    <property type="match status" value="1"/>
</dbReference>
<dbReference type="PANTHER" id="PTHR24960">
    <property type="entry name" value="PHOTOSYSTEM I IRON-SULFUR CENTER-RELATED"/>
    <property type="match status" value="1"/>
</dbReference>
<dbReference type="Pfam" id="PF14697">
    <property type="entry name" value="Fer4_21"/>
    <property type="match status" value="1"/>
</dbReference>
<dbReference type="SUPFAM" id="SSF54862">
    <property type="entry name" value="4Fe-4S ferredoxins"/>
    <property type="match status" value="1"/>
</dbReference>
<dbReference type="PROSITE" id="PS00198">
    <property type="entry name" value="4FE4S_FER_1"/>
    <property type="match status" value="2"/>
</dbReference>
<dbReference type="PROSITE" id="PS51379">
    <property type="entry name" value="4FE4S_FER_2"/>
    <property type="match status" value="2"/>
</dbReference>
<geneLocation type="chloroplast"/>
<comment type="function">
    <text evidence="1">Apoprotein for the two 4Fe-4S centers FA and FB of photosystem I (PSI); essential for photochemical activity. FB is the terminal electron acceptor of PSI, donating electrons to ferredoxin. The C-terminus interacts with PsaA/B/D and helps assemble the protein into the PSI complex. Required for binding of PsaD and PsaE to PSI. PSI is a plastocyanin-ferredoxin oxidoreductase, converting photonic excitation into a charge separation, which transfers an electron from the donor P700 chlorophyll pair to the spectroscopically characterized acceptors A0, A1, FX, FA and FB in turn.</text>
</comment>
<comment type="catalytic activity">
    <reaction evidence="1">
        <text>reduced [plastocyanin] + hnu + oxidized [2Fe-2S]-[ferredoxin] = oxidized [plastocyanin] + reduced [2Fe-2S]-[ferredoxin]</text>
        <dbReference type="Rhea" id="RHEA:30407"/>
        <dbReference type="Rhea" id="RHEA-COMP:10000"/>
        <dbReference type="Rhea" id="RHEA-COMP:10001"/>
        <dbReference type="Rhea" id="RHEA-COMP:10039"/>
        <dbReference type="Rhea" id="RHEA-COMP:10040"/>
        <dbReference type="ChEBI" id="CHEBI:29036"/>
        <dbReference type="ChEBI" id="CHEBI:30212"/>
        <dbReference type="ChEBI" id="CHEBI:33737"/>
        <dbReference type="ChEBI" id="CHEBI:33738"/>
        <dbReference type="ChEBI" id="CHEBI:49552"/>
        <dbReference type="EC" id="1.97.1.12"/>
    </reaction>
</comment>
<comment type="cofactor">
    <cofactor evidence="1">
        <name>[4Fe-4S] cluster</name>
        <dbReference type="ChEBI" id="CHEBI:49883"/>
    </cofactor>
    <text evidence="1">Binds 2 [4Fe-4S] clusters. Cluster 2 is most probably the spectroscopically characterized electron acceptor FA and cluster 1 is most probably FB.</text>
</comment>
<comment type="subunit">
    <text evidence="1">The eukaryotic PSI reaction center is composed of at least 11 subunits.</text>
</comment>
<comment type="subcellular location">
    <subcellularLocation>
        <location evidence="1">Plastid</location>
        <location evidence="1">Chloroplast thylakoid membrane</location>
        <topology evidence="1">Peripheral membrane protein</topology>
        <orientation evidence="1">Stromal side</orientation>
    </subcellularLocation>
</comment>
<evidence type="ECO:0000255" key="1">
    <source>
        <dbReference type="HAMAP-Rule" id="MF_01303"/>
    </source>
</evidence>
<organism>
    <name type="scientific">Crucihimalaya wallichii</name>
    <name type="common">Rock-cress</name>
    <name type="synonym">Arabidopsis campestris</name>
    <dbReference type="NCBI Taxonomy" id="78192"/>
    <lineage>
        <taxon>Eukaryota</taxon>
        <taxon>Viridiplantae</taxon>
        <taxon>Streptophyta</taxon>
        <taxon>Embryophyta</taxon>
        <taxon>Tracheophyta</taxon>
        <taxon>Spermatophyta</taxon>
        <taxon>Magnoliopsida</taxon>
        <taxon>eudicotyledons</taxon>
        <taxon>Gunneridae</taxon>
        <taxon>Pentapetalae</taxon>
        <taxon>rosids</taxon>
        <taxon>malvids</taxon>
        <taxon>Brassicales</taxon>
        <taxon>Brassicaceae</taxon>
        <taxon>Crucihimalayeae</taxon>
        <taxon>Crucihimalaya</taxon>
    </lineage>
</organism>
<reference key="1">
    <citation type="submission" date="2007-03" db="EMBL/GenBank/DDBJ databases">
        <title>Sequencing analysis of Crucihimalaya wallichii chloroplast DNA.</title>
        <authorList>
            <person name="Hosouchi T."/>
            <person name="Tsuruoka H."/>
            <person name="Kotani H."/>
        </authorList>
    </citation>
    <scope>NUCLEOTIDE SEQUENCE [LARGE SCALE GENOMIC DNA]</scope>
</reference>